<keyword id="KW-0028">Amino-acid biosynthesis</keyword>
<keyword id="KW-0057">Aromatic amino acid biosynthesis</keyword>
<keyword id="KW-0210">Decarboxylase</keyword>
<keyword id="KW-0456">Lyase</keyword>
<keyword id="KW-1185">Reference proteome</keyword>
<keyword id="KW-0822">Tryptophan biosynthesis</keyword>
<proteinExistence type="inferred from homology"/>
<feature type="chain" id="PRO_1000095870" description="Indole-3-glycerol phosphate synthase">
    <location>
        <begin position="1"/>
        <end position="262"/>
    </location>
</feature>
<dbReference type="EC" id="4.1.1.48" evidence="1"/>
<dbReference type="EMBL" id="CP001013">
    <property type="protein sequence ID" value="ACB36130.1"/>
    <property type="molecule type" value="Genomic_DNA"/>
</dbReference>
<dbReference type="RefSeq" id="WP_012348876.1">
    <property type="nucleotide sequence ID" value="NC_010524.1"/>
</dbReference>
<dbReference type="SMR" id="B1Y7I2"/>
<dbReference type="STRING" id="395495.Lcho_3876"/>
<dbReference type="KEGG" id="lch:Lcho_3876"/>
<dbReference type="eggNOG" id="COG0134">
    <property type="taxonomic scope" value="Bacteria"/>
</dbReference>
<dbReference type="HOGENOM" id="CLU_034247_2_0_4"/>
<dbReference type="OrthoDB" id="9804217at2"/>
<dbReference type="UniPathway" id="UPA00035">
    <property type="reaction ID" value="UER00043"/>
</dbReference>
<dbReference type="Proteomes" id="UP000001693">
    <property type="component" value="Chromosome"/>
</dbReference>
<dbReference type="GO" id="GO:0004425">
    <property type="term" value="F:indole-3-glycerol-phosphate synthase activity"/>
    <property type="evidence" value="ECO:0007669"/>
    <property type="project" value="UniProtKB-UniRule"/>
</dbReference>
<dbReference type="GO" id="GO:0004640">
    <property type="term" value="F:phosphoribosylanthranilate isomerase activity"/>
    <property type="evidence" value="ECO:0007669"/>
    <property type="project" value="TreeGrafter"/>
</dbReference>
<dbReference type="GO" id="GO:0000162">
    <property type="term" value="P:L-tryptophan biosynthetic process"/>
    <property type="evidence" value="ECO:0007669"/>
    <property type="project" value="UniProtKB-UniRule"/>
</dbReference>
<dbReference type="CDD" id="cd00331">
    <property type="entry name" value="IGPS"/>
    <property type="match status" value="1"/>
</dbReference>
<dbReference type="FunFam" id="3.20.20.70:FF:000024">
    <property type="entry name" value="Indole-3-glycerol phosphate synthase"/>
    <property type="match status" value="1"/>
</dbReference>
<dbReference type="Gene3D" id="3.20.20.70">
    <property type="entry name" value="Aldolase class I"/>
    <property type="match status" value="1"/>
</dbReference>
<dbReference type="HAMAP" id="MF_00134_B">
    <property type="entry name" value="IGPS_B"/>
    <property type="match status" value="1"/>
</dbReference>
<dbReference type="InterPro" id="IPR013785">
    <property type="entry name" value="Aldolase_TIM"/>
</dbReference>
<dbReference type="InterPro" id="IPR045186">
    <property type="entry name" value="Indole-3-glycerol_P_synth"/>
</dbReference>
<dbReference type="InterPro" id="IPR013798">
    <property type="entry name" value="Indole-3-glycerol_P_synth_dom"/>
</dbReference>
<dbReference type="InterPro" id="IPR001468">
    <property type="entry name" value="Indole-3-GlycerolPSynthase_CS"/>
</dbReference>
<dbReference type="InterPro" id="IPR011060">
    <property type="entry name" value="RibuloseP-bd_barrel"/>
</dbReference>
<dbReference type="NCBIfam" id="NF001370">
    <property type="entry name" value="PRK00278.1-2"/>
    <property type="match status" value="1"/>
</dbReference>
<dbReference type="NCBIfam" id="NF001373">
    <property type="entry name" value="PRK00278.1-6"/>
    <property type="match status" value="1"/>
</dbReference>
<dbReference type="NCBIfam" id="NF001377">
    <property type="entry name" value="PRK00278.2-4"/>
    <property type="match status" value="1"/>
</dbReference>
<dbReference type="PANTHER" id="PTHR22854:SF2">
    <property type="entry name" value="INDOLE-3-GLYCEROL-PHOSPHATE SYNTHASE"/>
    <property type="match status" value="1"/>
</dbReference>
<dbReference type="PANTHER" id="PTHR22854">
    <property type="entry name" value="TRYPTOPHAN BIOSYNTHESIS PROTEIN"/>
    <property type="match status" value="1"/>
</dbReference>
<dbReference type="Pfam" id="PF00218">
    <property type="entry name" value="IGPS"/>
    <property type="match status" value="1"/>
</dbReference>
<dbReference type="SUPFAM" id="SSF51366">
    <property type="entry name" value="Ribulose-phoshate binding barrel"/>
    <property type="match status" value="1"/>
</dbReference>
<dbReference type="PROSITE" id="PS00614">
    <property type="entry name" value="IGPS"/>
    <property type="match status" value="1"/>
</dbReference>
<protein>
    <recommendedName>
        <fullName evidence="1">Indole-3-glycerol phosphate synthase</fullName>
        <shortName evidence="1">IGPS</shortName>
        <ecNumber evidence="1">4.1.1.48</ecNumber>
    </recommendedName>
</protein>
<organism>
    <name type="scientific">Leptothrix cholodnii (strain ATCC 51168 / LMG 8142 / SP-6)</name>
    <name type="common">Leptothrix discophora (strain SP-6)</name>
    <dbReference type="NCBI Taxonomy" id="395495"/>
    <lineage>
        <taxon>Bacteria</taxon>
        <taxon>Pseudomonadati</taxon>
        <taxon>Pseudomonadota</taxon>
        <taxon>Betaproteobacteria</taxon>
        <taxon>Burkholderiales</taxon>
        <taxon>Sphaerotilaceae</taxon>
        <taxon>Leptothrix</taxon>
    </lineage>
</organism>
<accession>B1Y7I2</accession>
<gene>
    <name evidence="1" type="primary">trpC</name>
    <name type="ordered locus">Lcho_3876</name>
</gene>
<reference key="1">
    <citation type="submission" date="2008-03" db="EMBL/GenBank/DDBJ databases">
        <title>Complete sequence of Leptothrix cholodnii SP-6.</title>
        <authorList>
            <consortium name="US DOE Joint Genome Institute"/>
            <person name="Copeland A."/>
            <person name="Lucas S."/>
            <person name="Lapidus A."/>
            <person name="Glavina del Rio T."/>
            <person name="Dalin E."/>
            <person name="Tice H."/>
            <person name="Bruce D."/>
            <person name="Goodwin L."/>
            <person name="Pitluck S."/>
            <person name="Chertkov O."/>
            <person name="Brettin T."/>
            <person name="Detter J.C."/>
            <person name="Han C."/>
            <person name="Kuske C.R."/>
            <person name="Schmutz J."/>
            <person name="Larimer F."/>
            <person name="Land M."/>
            <person name="Hauser L."/>
            <person name="Kyrpides N."/>
            <person name="Lykidis A."/>
            <person name="Emerson D."/>
            <person name="Richardson P."/>
        </authorList>
    </citation>
    <scope>NUCLEOTIDE SEQUENCE [LARGE SCALE GENOMIC DNA]</scope>
    <source>
        <strain>ATCC 51168 / LMG 8142 / SP-6</strain>
    </source>
</reference>
<comment type="catalytic activity">
    <reaction evidence="1">
        <text>1-(2-carboxyphenylamino)-1-deoxy-D-ribulose 5-phosphate + H(+) = (1S,2R)-1-C-(indol-3-yl)glycerol 3-phosphate + CO2 + H2O</text>
        <dbReference type="Rhea" id="RHEA:23476"/>
        <dbReference type="ChEBI" id="CHEBI:15377"/>
        <dbReference type="ChEBI" id="CHEBI:15378"/>
        <dbReference type="ChEBI" id="CHEBI:16526"/>
        <dbReference type="ChEBI" id="CHEBI:58613"/>
        <dbReference type="ChEBI" id="CHEBI:58866"/>
        <dbReference type="EC" id="4.1.1.48"/>
    </reaction>
</comment>
<comment type="pathway">
    <text evidence="1">Amino-acid biosynthesis; L-tryptophan biosynthesis; L-tryptophan from chorismate: step 4/5.</text>
</comment>
<comment type="similarity">
    <text evidence="1">Belongs to the TrpC family.</text>
</comment>
<name>TRPC_LEPCP</name>
<sequence>MSDILNKIVATKHEEIAAARAHRGLVSLRDEAEARTDVRGFEAAMRAKIAAGQAAVIAEVKKASPSKGVLREDFRPAEIAASYERHGAACLSVLTDALYFQGCADYLRQARAACALPVLRKDFMVDEYQVHEARAMGADAILLIAACLDDAQMADLEAVALAHRMSVLVEVHDRDELQRALRLKTPLLGINNRNLRTFEVTLDTTLGMLGEVPSDRLLVTESGILGRDDVQRMRAAQVHAFLVGEAFMRASDPGVALAALFA</sequence>
<evidence type="ECO:0000255" key="1">
    <source>
        <dbReference type="HAMAP-Rule" id="MF_00134"/>
    </source>
</evidence>